<accession>Q8W3L1</accession>
<accession>O49356</accession>
<name>MFDR_ARATH</name>
<sequence length="483" mass="53070">MSRYLARYMVSRYFSSASSRPLHVCIVGSGPAGFYTADKVLKAHEGAHVDIIDRLPTPFGLVRSGVAPDHPETKIAINQFSRVAQHERCSFIGNVKLGSDLSLSELRDLYHVVVLAYGAESDKDLGIPGESLSGIYSAREFVWWYNGHPDYSSLKPDLKTSDSAVILGQGNVALDVARILLRPTTELASTDIATHALSALKESSIRKVYLIGRRGPVQAALTAKELREVLGIKNLHIRIKQTDLSVTPADEEEMKTSRARKRIYELLSKAAAAAKTSEADPDQRELHFVFFRQPDQFLESDERKGHVSGVNLQKTILESVGTGKQIAVGTGEFEDLNCSMVLKAIGYKSVPVNGLPFDHKKGVVPNVKGRVVSHTSGDISQTEPGLYVCGWLKRGPVGIIATNLYCAEETVGSISEDIEEGVWKSSKAGSKGLMQLLEKRKVKKVEFSGWEKIDAKEKQMGIERNKPREKLVTWEDLLAAAAN</sequence>
<comment type="function">
    <text evidence="3 4">Associates in vitro with the adrenodoxin-like protein MFDX1 to form an efficient low potential electron transfer chain that is able to reduce cytochrome C (PubMed:12714594, PubMed:13677469). Functions as accessory mitochondrial protein involved with BIO2 in the plant biotin synthase reaction (PubMed:12714594).</text>
</comment>
<comment type="catalytic activity">
    <reaction evidence="4">
        <text>2 reduced [adrenodoxin] + NADP(+) + H(+) = 2 oxidized [adrenodoxin] + NADPH</text>
        <dbReference type="Rhea" id="RHEA:42312"/>
        <dbReference type="Rhea" id="RHEA-COMP:9998"/>
        <dbReference type="Rhea" id="RHEA-COMP:9999"/>
        <dbReference type="ChEBI" id="CHEBI:15378"/>
        <dbReference type="ChEBI" id="CHEBI:33737"/>
        <dbReference type="ChEBI" id="CHEBI:33738"/>
        <dbReference type="ChEBI" id="CHEBI:57783"/>
        <dbReference type="ChEBI" id="CHEBI:58349"/>
        <dbReference type="EC" id="1.18.1.6"/>
    </reaction>
</comment>
<comment type="cofactor">
    <cofactor evidence="4">
        <name>FAD</name>
        <dbReference type="ChEBI" id="CHEBI:57692"/>
    </cofactor>
</comment>
<comment type="biophysicochemical properties">
    <kinetics>
        <KM evidence="3">2.4 uM for NADPH</KM>
        <KM evidence="4">11.3 uM for NADPH</KM>
        <KM evidence="4">123 uM for NADH</KM>
        <KM evidence="3">1000 uM for NADH</KM>
    </kinetics>
</comment>
<comment type="subcellular location">
    <subcellularLocation>
        <location evidence="4">Mitochondrion</location>
    </subcellularLocation>
</comment>
<comment type="similarity">
    <text evidence="7">Belongs to the ferredoxin--NADP reductase type 1 family.</text>
</comment>
<comment type="sequence caution">
    <conflict type="erroneous gene model prediction">
        <sequence resource="EMBL-CDS" id="CAA16955"/>
    </conflict>
</comment>
<comment type="sequence caution">
    <conflict type="erroneous gene model prediction">
        <sequence resource="EMBL-CDS" id="CAA22563"/>
    </conflict>
</comment>
<comment type="sequence caution">
    <conflict type="erroneous gene model prediction">
        <sequence resource="EMBL-CDS" id="CAB79953"/>
    </conflict>
</comment>
<organism evidence="9">
    <name type="scientific">Arabidopsis thaliana</name>
    <name type="common">Mouse-ear cress</name>
    <dbReference type="NCBI Taxonomy" id="3702"/>
    <lineage>
        <taxon>Eukaryota</taxon>
        <taxon>Viridiplantae</taxon>
        <taxon>Streptophyta</taxon>
        <taxon>Embryophyta</taxon>
        <taxon>Tracheophyta</taxon>
        <taxon>Spermatophyta</taxon>
        <taxon>Magnoliopsida</taxon>
        <taxon>eudicotyledons</taxon>
        <taxon>Gunneridae</taxon>
        <taxon>Pentapetalae</taxon>
        <taxon>rosids</taxon>
        <taxon>malvids</taxon>
        <taxon>Brassicales</taxon>
        <taxon>Brassicaceae</taxon>
        <taxon>Camelineae</taxon>
        <taxon>Arabidopsis</taxon>
    </lineage>
</organism>
<keyword id="KW-0093">Biotin biosynthesis</keyword>
<keyword id="KW-0249">Electron transport</keyword>
<keyword id="KW-0274">FAD</keyword>
<keyword id="KW-0285">Flavoprotein</keyword>
<keyword id="KW-0496">Mitochondrion</keyword>
<keyword id="KW-0521">NADP</keyword>
<keyword id="KW-0560">Oxidoreductase</keyword>
<keyword id="KW-1185">Reference proteome</keyword>
<keyword id="KW-0809">Transit peptide</keyword>
<keyword id="KW-0813">Transport</keyword>
<reference key="1">
    <citation type="journal article" date="2003" name="J. Biol. Chem.">
        <title>The plant biotin synthase reaction. Identification and characterization of essential mitochondrial accessory protein components.</title>
        <authorList>
            <person name="Picciocchi A."/>
            <person name="Douce R."/>
            <person name="Alban C."/>
        </authorList>
    </citation>
    <scope>NUCLEOTIDE SEQUENCE [MRNA]</scope>
    <scope>FUNCTION</scope>
    <scope>BIOPHYSICOCHEMICAL PROPERTIES</scope>
    <source>
        <strain>cv. Columbia</strain>
    </source>
</reference>
<reference key="2">
    <citation type="journal article" date="2003" name="Plant Mol. Biol.">
        <title>Identification and molecular characterization of mitochondrial ferredoxins and ferredoxin reductase from Arabidopsis.</title>
        <authorList>
            <person name="Takubo K."/>
            <person name="Morikawa T."/>
            <person name="Nonaka Y."/>
            <person name="Mizutani M."/>
            <person name="Takenaka S."/>
            <person name="Takabe K."/>
            <person name="Takahashi M.A."/>
            <person name="Ohta D."/>
        </authorList>
    </citation>
    <scope>NUCLEOTIDE SEQUENCE [MRNA]</scope>
    <scope>FUNCTION</scope>
    <scope>CATALYTIC ACTIVITY</scope>
    <scope>COFACTOR</scope>
    <scope>BIOPHYSICOCHEMICAL PROPERTIES</scope>
    <scope>SUBCELLULAR LOCATION</scope>
    <source>
        <strain>cv. Columbia</strain>
    </source>
</reference>
<reference key="3">
    <citation type="journal article" date="1999" name="Nature">
        <title>Sequence and analysis of chromosome 4 of the plant Arabidopsis thaliana.</title>
        <authorList>
            <person name="Mayer K.F.X."/>
            <person name="Schueller C."/>
            <person name="Wambutt R."/>
            <person name="Murphy G."/>
            <person name="Volckaert G."/>
            <person name="Pohl T."/>
            <person name="Duesterhoeft A."/>
            <person name="Stiekema W."/>
            <person name="Entian K.-D."/>
            <person name="Terryn N."/>
            <person name="Harris B."/>
            <person name="Ansorge W."/>
            <person name="Brandt P."/>
            <person name="Grivell L.A."/>
            <person name="Rieger M."/>
            <person name="Weichselgartner M."/>
            <person name="de Simone V."/>
            <person name="Obermaier B."/>
            <person name="Mache R."/>
            <person name="Mueller M."/>
            <person name="Kreis M."/>
            <person name="Delseny M."/>
            <person name="Puigdomenech P."/>
            <person name="Watson M."/>
            <person name="Schmidtheini T."/>
            <person name="Reichert B."/>
            <person name="Portetelle D."/>
            <person name="Perez-Alonso M."/>
            <person name="Boutry M."/>
            <person name="Bancroft I."/>
            <person name="Vos P."/>
            <person name="Hoheisel J."/>
            <person name="Zimmermann W."/>
            <person name="Wedler H."/>
            <person name="Ridley P."/>
            <person name="Langham S.-A."/>
            <person name="McCullagh B."/>
            <person name="Bilham L."/>
            <person name="Robben J."/>
            <person name="van der Schueren J."/>
            <person name="Grymonprez B."/>
            <person name="Chuang Y.-J."/>
            <person name="Vandenbussche F."/>
            <person name="Braeken M."/>
            <person name="Weltjens I."/>
            <person name="Voet M."/>
            <person name="Bastiaens I."/>
            <person name="Aert R."/>
            <person name="Defoor E."/>
            <person name="Weitzenegger T."/>
            <person name="Bothe G."/>
            <person name="Ramsperger U."/>
            <person name="Hilbert H."/>
            <person name="Braun M."/>
            <person name="Holzer E."/>
            <person name="Brandt A."/>
            <person name="Peters S."/>
            <person name="van Staveren M."/>
            <person name="Dirkse W."/>
            <person name="Mooijman P."/>
            <person name="Klein Lankhorst R."/>
            <person name="Rose M."/>
            <person name="Hauf J."/>
            <person name="Koetter P."/>
            <person name="Berneiser S."/>
            <person name="Hempel S."/>
            <person name="Feldpausch M."/>
            <person name="Lamberth S."/>
            <person name="Van den Daele H."/>
            <person name="De Keyser A."/>
            <person name="Buysshaert C."/>
            <person name="Gielen J."/>
            <person name="Villarroel R."/>
            <person name="De Clercq R."/>
            <person name="van Montagu M."/>
            <person name="Rogers J."/>
            <person name="Cronin A."/>
            <person name="Quail M.A."/>
            <person name="Bray-Allen S."/>
            <person name="Clark L."/>
            <person name="Doggett J."/>
            <person name="Hall S."/>
            <person name="Kay M."/>
            <person name="Lennard N."/>
            <person name="McLay K."/>
            <person name="Mayes R."/>
            <person name="Pettett A."/>
            <person name="Rajandream M.A."/>
            <person name="Lyne M."/>
            <person name="Benes V."/>
            <person name="Rechmann S."/>
            <person name="Borkova D."/>
            <person name="Bloecker H."/>
            <person name="Scharfe M."/>
            <person name="Grimm M."/>
            <person name="Loehnert T.-H."/>
            <person name="Dose S."/>
            <person name="de Haan M."/>
            <person name="Maarse A.C."/>
            <person name="Schaefer M."/>
            <person name="Mueller-Auer S."/>
            <person name="Gabel C."/>
            <person name="Fuchs M."/>
            <person name="Fartmann B."/>
            <person name="Granderath K."/>
            <person name="Dauner D."/>
            <person name="Herzl A."/>
            <person name="Neumann S."/>
            <person name="Argiriou A."/>
            <person name="Vitale D."/>
            <person name="Liguori R."/>
            <person name="Piravandi E."/>
            <person name="Massenet O."/>
            <person name="Quigley F."/>
            <person name="Clabauld G."/>
            <person name="Muendlein A."/>
            <person name="Felber R."/>
            <person name="Schnabl S."/>
            <person name="Hiller R."/>
            <person name="Schmidt W."/>
            <person name="Lecharny A."/>
            <person name="Aubourg S."/>
            <person name="Chefdor F."/>
            <person name="Cooke R."/>
            <person name="Berger C."/>
            <person name="Monfort A."/>
            <person name="Casacuberta E."/>
            <person name="Gibbons T."/>
            <person name="Weber N."/>
            <person name="Vandenbol M."/>
            <person name="Bargues M."/>
            <person name="Terol J."/>
            <person name="Torres A."/>
            <person name="Perez-Perez A."/>
            <person name="Purnelle B."/>
            <person name="Bent E."/>
            <person name="Johnson S."/>
            <person name="Tacon D."/>
            <person name="Jesse T."/>
            <person name="Heijnen L."/>
            <person name="Schwarz S."/>
            <person name="Scholler P."/>
            <person name="Heber S."/>
            <person name="Francs P."/>
            <person name="Bielke C."/>
            <person name="Frishman D."/>
            <person name="Haase D."/>
            <person name="Lemcke K."/>
            <person name="Mewes H.-W."/>
            <person name="Stocker S."/>
            <person name="Zaccaria P."/>
            <person name="Bevan M."/>
            <person name="Wilson R.K."/>
            <person name="de la Bastide M."/>
            <person name="Habermann K."/>
            <person name="Parnell L."/>
            <person name="Dedhia N."/>
            <person name="Gnoj L."/>
            <person name="Schutz K."/>
            <person name="Huang E."/>
            <person name="Spiegel L."/>
            <person name="Sekhon M."/>
            <person name="Murray J."/>
            <person name="Sheet P."/>
            <person name="Cordes M."/>
            <person name="Abu-Threideh J."/>
            <person name="Stoneking T."/>
            <person name="Kalicki J."/>
            <person name="Graves T."/>
            <person name="Harmon G."/>
            <person name="Edwards J."/>
            <person name="Latreille P."/>
            <person name="Courtney L."/>
            <person name="Cloud J."/>
            <person name="Abbott A."/>
            <person name="Scott K."/>
            <person name="Johnson D."/>
            <person name="Minx P."/>
            <person name="Bentley D."/>
            <person name="Fulton B."/>
            <person name="Miller N."/>
            <person name="Greco T."/>
            <person name="Kemp K."/>
            <person name="Kramer J."/>
            <person name="Fulton L."/>
            <person name="Mardis E."/>
            <person name="Dante M."/>
            <person name="Pepin K."/>
            <person name="Hillier L.W."/>
            <person name="Nelson J."/>
            <person name="Spieth J."/>
            <person name="Ryan E."/>
            <person name="Andrews S."/>
            <person name="Geisel C."/>
            <person name="Layman D."/>
            <person name="Du H."/>
            <person name="Ali J."/>
            <person name="Berghoff A."/>
            <person name="Jones K."/>
            <person name="Drone K."/>
            <person name="Cotton M."/>
            <person name="Joshu C."/>
            <person name="Antonoiu B."/>
            <person name="Zidanic M."/>
            <person name="Strong C."/>
            <person name="Sun H."/>
            <person name="Lamar B."/>
            <person name="Yordan C."/>
            <person name="Ma P."/>
            <person name="Zhong J."/>
            <person name="Preston R."/>
            <person name="Vil D."/>
            <person name="Shekher M."/>
            <person name="Matero A."/>
            <person name="Shah R."/>
            <person name="Swaby I.K."/>
            <person name="O'Shaughnessy A."/>
            <person name="Rodriguez M."/>
            <person name="Hoffman J."/>
            <person name="Till S."/>
            <person name="Granat S."/>
            <person name="Shohdy N."/>
            <person name="Hasegawa A."/>
            <person name="Hameed A."/>
            <person name="Lodhi M."/>
            <person name="Johnson A."/>
            <person name="Chen E."/>
            <person name="Marra M.A."/>
            <person name="Martienssen R."/>
            <person name="McCombie W.R."/>
        </authorList>
    </citation>
    <scope>NUCLEOTIDE SEQUENCE [LARGE SCALE GENOMIC DNA]</scope>
    <source>
        <strain>cv. Columbia</strain>
    </source>
</reference>
<reference key="4">
    <citation type="journal article" date="2017" name="Plant J.">
        <title>Araport11: a complete reannotation of the Arabidopsis thaliana reference genome.</title>
        <authorList>
            <person name="Cheng C.Y."/>
            <person name="Krishnakumar V."/>
            <person name="Chan A.P."/>
            <person name="Thibaud-Nissen F."/>
            <person name="Schobel S."/>
            <person name="Town C.D."/>
        </authorList>
    </citation>
    <scope>GENOME REANNOTATION</scope>
    <source>
        <strain>cv. Columbia</strain>
    </source>
</reference>
<proteinExistence type="evidence at protein level"/>
<protein>
    <recommendedName>
        <fullName>NADPH:adrenodoxin oxidoreductase, mitochondrial</fullName>
        <shortName evidence="5">Adrenodoxin reductase</shortName>
        <ecNumber evidence="4">1.18.1.6</ecNumber>
    </recommendedName>
    <alternativeName>
        <fullName>Mitochondrial ferredoxin reductase</fullName>
        <shortName evidence="6">AtMFDR</shortName>
    </alternativeName>
</protein>
<feature type="transit peptide" description="Mitochondrion" evidence="2">
    <location>
        <begin position="1"/>
        <end position="14"/>
    </location>
</feature>
<feature type="chain" id="PRO_0000430544" description="NADPH:adrenodoxin oxidoreductase, mitochondrial">
    <location>
        <begin position="15"/>
        <end position="483"/>
    </location>
</feature>
<feature type="binding site" evidence="1">
    <location>
        <position position="32"/>
    </location>
    <ligand>
        <name>FAD</name>
        <dbReference type="ChEBI" id="CHEBI:57692"/>
    </ligand>
</feature>
<feature type="binding site" evidence="1">
    <location>
        <position position="53"/>
    </location>
    <ligand>
        <name>FAD</name>
        <dbReference type="ChEBI" id="CHEBI:57692"/>
    </ligand>
</feature>
<feature type="binding site" evidence="1">
    <location>
        <position position="61"/>
    </location>
    <ligand>
        <name>FAD</name>
        <dbReference type="ChEBI" id="CHEBI:57692"/>
    </ligand>
</feature>
<feature type="binding site" evidence="1">
    <location>
        <position position="97"/>
    </location>
    <ligand>
        <name>FAD</name>
        <dbReference type="ChEBI" id="CHEBI:57692"/>
    </ligand>
</feature>
<feature type="binding site" evidence="1">
    <location>
        <begin position="169"/>
        <end position="172"/>
    </location>
    <ligand>
        <name>NADP(+)</name>
        <dbReference type="ChEBI" id="CHEBI:58349"/>
    </ligand>
</feature>
<feature type="binding site" evidence="1">
    <location>
        <begin position="213"/>
        <end position="214"/>
    </location>
    <ligand>
        <name>NADP(+)</name>
        <dbReference type="ChEBI" id="CHEBI:58349"/>
    </ligand>
</feature>
<feature type="binding site" evidence="1">
    <location>
        <position position="225"/>
    </location>
    <ligand>
        <name>NADP(+)</name>
        <dbReference type="ChEBI" id="CHEBI:58349"/>
    </ligand>
</feature>
<feature type="binding site" evidence="1">
    <location>
        <position position="391"/>
    </location>
    <ligand>
        <name>FAD</name>
        <dbReference type="ChEBI" id="CHEBI:57692"/>
    </ligand>
</feature>
<feature type="binding site" evidence="1">
    <location>
        <begin position="398"/>
        <end position="400"/>
    </location>
    <ligand>
        <name>FAD</name>
        <dbReference type="ChEBI" id="CHEBI:57692"/>
    </ligand>
</feature>
<feature type="binding site" evidence="1">
    <location>
        <position position="398"/>
    </location>
    <ligand>
        <name>NADP(+)</name>
        <dbReference type="ChEBI" id="CHEBI:58349"/>
    </ligand>
</feature>
<gene>
    <name evidence="6" type="primary">MFDR</name>
    <name evidence="5" type="synonym">ADXR</name>
    <name evidence="8" type="ordered locus">At4g32360</name>
    <name evidence="10" type="ORF">F10M6.10</name>
    <name evidence="11" type="ORF">F8B4.60</name>
</gene>
<evidence type="ECO:0000250" key="1">
    <source>
        <dbReference type="UniProtKB" id="P08165"/>
    </source>
</evidence>
<evidence type="ECO:0000255" key="2"/>
<evidence type="ECO:0000269" key="3">
    <source>
    </source>
</evidence>
<evidence type="ECO:0000269" key="4">
    <source>
    </source>
</evidence>
<evidence type="ECO:0000303" key="5">
    <source>
    </source>
</evidence>
<evidence type="ECO:0000303" key="6">
    <source>
    </source>
</evidence>
<evidence type="ECO:0000305" key="7"/>
<evidence type="ECO:0000312" key="8">
    <source>
        <dbReference type="Araport" id="AT4G32360"/>
    </source>
</evidence>
<evidence type="ECO:0000312" key="9">
    <source>
        <dbReference type="EMBL" id="BAB79228.1"/>
    </source>
</evidence>
<evidence type="ECO:0000312" key="10">
    <source>
        <dbReference type="EMBL" id="CAA16955.1"/>
    </source>
</evidence>
<evidence type="ECO:0000312" key="11">
    <source>
        <dbReference type="EMBL" id="CAA22563.1"/>
    </source>
</evidence>
<dbReference type="EC" id="1.18.1.6" evidence="4"/>
<dbReference type="EMBL" id="AY074927">
    <property type="protein sequence ID" value="AAL82814.1"/>
    <property type="molecule type" value="mRNA"/>
</dbReference>
<dbReference type="EMBL" id="AB075740">
    <property type="protein sequence ID" value="BAB79228.1"/>
    <property type="molecule type" value="mRNA"/>
</dbReference>
<dbReference type="EMBL" id="AL021811">
    <property type="protein sequence ID" value="CAA16955.1"/>
    <property type="status" value="ALT_SEQ"/>
    <property type="molecule type" value="Genomic_DNA"/>
</dbReference>
<dbReference type="EMBL" id="AL034567">
    <property type="protein sequence ID" value="CAA22563.1"/>
    <property type="status" value="ALT_SEQ"/>
    <property type="molecule type" value="Genomic_DNA"/>
</dbReference>
<dbReference type="EMBL" id="AL161581">
    <property type="protein sequence ID" value="CAB79953.1"/>
    <property type="status" value="ALT_SEQ"/>
    <property type="molecule type" value="Genomic_DNA"/>
</dbReference>
<dbReference type="EMBL" id="CP002687">
    <property type="protein sequence ID" value="AEE86046.1"/>
    <property type="molecule type" value="Genomic_DNA"/>
</dbReference>
<dbReference type="PIR" id="T05346">
    <property type="entry name" value="T05346"/>
</dbReference>
<dbReference type="RefSeq" id="NP_194962.2">
    <property type="nucleotide sequence ID" value="NM_119388.5"/>
</dbReference>
<dbReference type="SMR" id="Q8W3L1"/>
<dbReference type="BioGRID" id="14656">
    <property type="interactions" value="1"/>
</dbReference>
<dbReference type="FunCoup" id="Q8W3L1">
    <property type="interactions" value="3542"/>
</dbReference>
<dbReference type="STRING" id="3702.Q8W3L1"/>
<dbReference type="PaxDb" id="3702-AT4G32360.1"/>
<dbReference type="EnsemblPlants" id="AT4G32360.1">
    <property type="protein sequence ID" value="AT4G32360.1"/>
    <property type="gene ID" value="AT4G32360"/>
</dbReference>
<dbReference type="GeneID" id="829370"/>
<dbReference type="Gramene" id="AT4G32360.1">
    <property type="protein sequence ID" value="AT4G32360.1"/>
    <property type="gene ID" value="AT4G32360"/>
</dbReference>
<dbReference type="KEGG" id="ath:AT4G32360"/>
<dbReference type="Araport" id="AT4G32360"/>
<dbReference type="TAIR" id="AT4G32360"/>
<dbReference type="eggNOG" id="KOG1800">
    <property type="taxonomic scope" value="Eukaryota"/>
</dbReference>
<dbReference type="HOGENOM" id="CLU_024722_3_0_1"/>
<dbReference type="InParanoid" id="Q8W3L1"/>
<dbReference type="OMA" id="RFNFIGN"/>
<dbReference type="OrthoDB" id="333024at2759"/>
<dbReference type="PhylomeDB" id="Q8W3L1"/>
<dbReference type="BioCyc" id="ARA:AT4G32360-MONOMER"/>
<dbReference type="BRENDA" id="2.8.1.6">
    <property type="organism ID" value="399"/>
</dbReference>
<dbReference type="SABIO-RK" id="Q8W3L1"/>
<dbReference type="PRO" id="PR:Q8W3L1"/>
<dbReference type="Proteomes" id="UP000006548">
    <property type="component" value="Chromosome 4"/>
</dbReference>
<dbReference type="ExpressionAtlas" id="Q8W3L1">
    <property type="expression patterns" value="baseline and differential"/>
</dbReference>
<dbReference type="GO" id="GO:0005739">
    <property type="term" value="C:mitochondrion"/>
    <property type="evidence" value="ECO:0000314"/>
    <property type="project" value="UniProtKB"/>
</dbReference>
<dbReference type="GO" id="GO:0005886">
    <property type="term" value="C:plasma membrane"/>
    <property type="evidence" value="ECO:0007005"/>
    <property type="project" value="TAIR"/>
</dbReference>
<dbReference type="GO" id="GO:0050660">
    <property type="term" value="F:flavin adenine dinucleotide binding"/>
    <property type="evidence" value="ECO:0000314"/>
    <property type="project" value="UniProtKB"/>
</dbReference>
<dbReference type="GO" id="GO:0016731">
    <property type="term" value="F:oxidoreductase activity, acting on iron-sulfur proteins as donors, NAD or NADP as acceptor"/>
    <property type="evidence" value="ECO:0000314"/>
    <property type="project" value="UniProtKB"/>
</dbReference>
<dbReference type="GO" id="GO:0009102">
    <property type="term" value="P:biotin biosynthetic process"/>
    <property type="evidence" value="ECO:0007669"/>
    <property type="project" value="UniProtKB-KW"/>
</dbReference>
<dbReference type="GO" id="GO:0022900">
    <property type="term" value="P:electron transport chain"/>
    <property type="evidence" value="ECO:0000314"/>
    <property type="project" value="UniProtKB"/>
</dbReference>
<dbReference type="FunFam" id="3.50.50.60:FF:000036">
    <property type="entry name" value="NADPH:adrenodoxin oxidoreductase, mitochondrial"/>
    <property type="match status" value="1"/>
</dbReference>
<dbReference type="Gene3D" id="3.50.50.60">
    <property type="entry name" value="FAD/NAD(P)-binding domain"/>
    <property type="match status" value="1"/>
</dbReference>
<dbReference type="Gene3D" id="3.40.50.720">
    <property type="entry name" value="NAD(P)-binding Rossmann-like Domain"/>
    <property type="match status" value="1"/>
</dbReference>
<dbReference type="InterPro" id="IPR036188">
    <property type="entry name" value="FAD/NAD-bd_sf"/>
</dbReference>
<dbReference type="InterPro" id="IPR023753">
    <property type="entry name" value="FAD/NAD-binding_dom"/>
</dbReference>
<dbReference type="InterPro" id="IPR055275">
    <property type="entry name" value="Ferredox_Rdtase"/>
</dbReference>
<dbReference type="InterPro" id="IPR021163">
    <property type="entry name" value="Ferredox_Rdtase_adrenod"/>
</dbReference>
<dbReference type="PANTHER" id="PTHR48467">
    <property type="entry name" value="GLUTAMATE SYNTHASE 1 [NADH], CHLOROPLASTIC-LIKE"/>
    <property type="match status" value="1"/>
</dbReference>
<dbReference type="PANTHER" id="PTHR48467:SF1">
    <property type="entry name" value="GLUTAMATE SYNTHASE 1 [NADH], CHLOROPLASTIC-LIKE"/>
    <property type="match status" value="1"/>
</dbReference>
<dbReference type="Pfam" id="PF07992">
    <property type="entry name" value="Pyr_redox_2"/>
    <property type="match status" value="1"/>
</dbReference>
<dbReference type="PIRSF" id="PIRSF000362">
    <property type="entry name" value="FNR"/>
    <property type="match status" value="1"/>
</dbReference>
<dbReference type="PRINTS" id="PR00419">
    <property type="entry name" value="ADXRDTASE"/>
</dbReference>
<dbReference type="SUPFAM" id="SSF51971">
    <property type="entry name" value="Nucleotide-binding domain"/>
    <property type="match status" value="2"/>
</dbReference>